<dbReference type="EMBL" id="AB030200">
    <property type="protein sequence ID" value="BAA92763.1"/>
    <property type="molecule type" value="mRNA"/>
</dbReference>
<dbReference type="EMBL" id="AK007526">
    <property type="protein sequence ID" value="BAB25089.1"/>
    <property type="molecule type" value="mRNA"/>
</dbReference>
<dbReference type="EMBL" id="BC028502">
    <property type="protein sequence ID" value="AAH28502.1"/>
    <property type="molecule type" value="mRNA"/>
</dbReference>
<dbReference type="EMBL" id="BC114968">
    <property type="protein sequence ID" value="AAI14969.1"/>
    <property type="status" value="ALT_INIT"/>
    <property type="molecule type" value="mRNA"/>
</dbReference>
<dbReference type="CCDS" id="CCDS22742.1"/>
<dbReference type="RefSeq" id="NP_067477.1">
    <property type="nucleotide sequence ID" value="NM_021502.2"/>
</dbReference>
<dbReference type="SMR" id="Q9JME7"/>
<dbReference type="BioGRID" id="208476">
    <property type="interactions" value="10"/>
</dbReference>
<dbReference type="ComplexPortal" id="CPX-4764">
    <property type="entry name" value="TRAPP II complex"/>
</dbReference>
<dbReference type="ComplexPortal" id="CPX-4766">
    <property type="entry name" value="TRAPP III complex"/>
</dbReference>
<dbReference type="FunCoup" id="Q9JME7">
    <property type="interactions" value="2013"/>
</dbReference>
<dbReference type="IntAct" id="Q9JME7">
    <property type="interactions" value="1"/>
</dbReference>
<dbReference type="STRING" id="10090.ENSMUSP00000015157"/>
<dbReference type="iPTMnet" id="Q9JME7"/>
<dbReference type="PhosphoSitePlus" id="Q9JME7"/>
<dbReference type="PaxDb" id="10090-ENSMUSP00000015157"/>
<dbReference type="PeptideAtlas" id="Q9JME7"/>
<dbReference type="ProteomicsDB" id="260726"/>
<dbReference type="Pumba" id="Q9JME7"/>
<dbReference type="Antibodypedia" id="44977">
    <property type="antibodies" value="60 antibodies from 17 providers"/>
</dbReference>
<dbReference type="DNASU" id="59005"/>
<dbReference type="Ensembl" id="ENSMUST00000015157.10">
    <property type="protein sequence ID" value="ENSMUSP00000015157.9"/>
    <property type="gene ID" value="ENSMUSG00000015013.10"/>
</dbReference>
<dbReference type="GeneID" id="59005"/>
<dbReference type="KEGG" id="mmu:59005"/>
<dbReference type="UCSC" id="uc009ntj.2">
    <property type="organism name" value="mouse"/>
</dbReference>
<dbReference type="AGR" id="MGI:1916295"/>
<dbReference type="CTD" id="51693"/>
<dbReference type="MGI" id="MGI:1916295">
    <property type="gene designation" value="Trappc2l"/>
</dbReference>
<dbReference type="VEuPathDB" id="HostDB:ENSMUSG00000015013"/>
<dbReference type="eggNOG" id="KOG3444">
    <property type="taxonomic scope" value="Eukaryota"/>
</dbReference>
<dbReference type="GeneTree" id="ENSGT00510000047505"/>
<dbReference type="HOGENOM" id="CLU_085828_2_3_1"/>
<dbReference type="InParanoid" id="Q9JME7"/>
<dbReference type="OMA" id="QNPFYEP"/>
<dbReference type="OrthoDB" id="17287at9989"/>
<dbReference type="PhylomeDB" id="Q9JME7"/>
<dbReference type="TreeFam" id="TF323920"/>
<dbReference type="Reactome" id="R-MMU-204005">
    <property type="pathway name" value="COPII-mediated vesicle transport"/>
</dbReference>
<dbReference type="Reactome" id="R-MMU-8876198">
    <property type="pathway name" value="RAB GEFs exchange GTP for GDP on RABs"/>
</dbReference>
<dbReference type="BioGRID-ORCS" id="59005">
    <property type="hits" value="3 hits in 76 CRISPR screens"/>
</dbReference>
<dbReference type="ChiTaRS" id="Trappc2l">
    <property type="organism name" value="mouse"/>
</dbReference>
<dbReference type="PRO" id="PR:Q9JME7"/>
<dbReference type="Proteomes" id="UP000000589">
    <property type="component" value="Chromosome 8"/>
</dbReference>
<dbReference type="RNAct" id="Q9JME7">
    <property type="molecule type" value="protein"/>
</dbReference>
<dbReference type="Bgee" id="ENSMUSG00000015013">
    <property type="expression patterns" value="Expressed in facial nucleus and 258 other cell types or tissues"/>
</dbReference>
<dbReference type="GO" id="GO:0005737">
    <property type="term" value="C:cytoplasm"/>
    <property type="evidence" value="ECO:0000303"/>
    <property type="project" value="ComplexPortal"/>
</dbReference>
<dbReference type="GO" id="GO:0005829">
    <property type="term" value="C:cytosol"/>
    <property type="evidence" value="ECO:0007669"/>
    <property type="project" value="Ensembl"/>
</dbReference>
<dbReference type="GO" id="GO:0005783">
    <property type="term" value="C:endoplasmic reticulum"/>
    <property type="evidence" value="ECO:0007669"/>
    <property type="project" value="UniProtKB-SubCell"/>
</dbReference>
<dbReference type="GO" id="GO:0048471">
    <property type="term" value="C:perinuclear region of cytoplasm"/>
    <property type="evidence" value="ECO:0007669"/>
    <property type="project" value="UniProtKB-SubCell"/>
</dbReference>
<dbReference type="GO" id="GO:1990071">
    <property type="term" value="C:TRAPPII protein complex"/>
    <property type="evidence" value="ECO:0000303"/>
    <property type="project" value="ComplexPortal"/>
</dbReference>
<dbReference type="GO" id="GO:1990072">
    <property type="term" value="C:TRAPPIII protein complex"/>
    <property type="evidence" value="ECO:0000303"/>
    <property type="project" value="ComplexPortal"/>
</dbReference>
<dbReference type="GO" id="GO:0048208">
    <property type="term" value="P:COPII vesicle coating"/>
    <property type="evidence" value="ECO:0000303"/>
    <property type="project" value="ComplexPortal"/>
</dbReference>
<dbReference type="GO" id="GO:0006888">
    <property type="term" value="P:endoplasmic reticulum to Golgi vesicle-mediated transport"/>
    <property type="evidence" value="ECO:0000303"/>
    <property type="project" value="ComplexPortal"/>
</dbReference>
<dbReference type="GO" id="GO:0006901">
    <property type="term" value="P:vesicle coating"/>
    <property type="evidence" value="ECO:0000303"/>
    <property type="project" value="ComplexPortal"/>
</dbReference>
<dbReference type="GO" id="GO:0099022">
    <property type="term" value="P:vesicle tethering"/>
    <property type="evidence" value="ECO:0000303"/>
    <property type="project" value="ComplexPortal"/>
</dbReference>
<dbReference type="CDD" id="cd14854">
    <property type="entry name" value="TRAPPC2L"/>
    <property type="match status" value="1"/>
</dbReference>
<dbReference type="FunFam" id="3.30.450.70:FF:000005">
    <property type="entry name" value="Trafficking protein particle complex subunit 2-like protein"/>
    <property type="match status" value="1"/>
</dbReference>
<dbReference type="Gene3D" id="3.30.450.70">
    <property type="match status" value="1"/>
</dbReference>
<dbReference type="InterPro" id="IPR011012">
    <property type="entry name" value="Longin-like_dom_sf"/>
</dbReference>
<dbReference type="InterPro" id="IPR006722">
    <property type="entry name" value="Sedlin"/>
</dbReference>
<dbReference type="InterPro" id="IPR044760">
    <property type="entry name" value="TRAPPC2L"/>
</dbReference>
<dbReference type="PANTHER" id="PTHR12403">
    <property type="entry name" value="TRAFFICKING PROTEIN PARTICLE COMPLEX SUBUNIT 2"/>
    <property type="match status" value="1"/>
</dbReference>
<dbReference type="Pfam" id="PF04628">
    <property type="entry name" value="Sedlin_N"/>
    <property type="match status" value="1"/>
</dbReference>
<dbReference type="SUPFAM" id="SSF64356">
    <property type="entry name" value="SNARE-like"/>
    <property type="match status" value="1"/>
</dbReference>
<name>TPC2L_MOUSE</name>
<feature type="chain" id="PRO_0000294452" description="Trafficking protein particle complex subunit 2-like protein">
    <location>
        <begin position="1"/>
        <end position="139"/>
    </location>
</feature>
<proteinExistence type="evidence at protein level"/>
<evidence type="ECO:0000250" key="1"/>
<evidence type="ECO:0000305" key="2"/>
<reference key="1">
    <citation type="journal article" date="2000" name="Biochem. Biophys. Res. Commun.">
        <title>Growth suppression of Escherichia coli by induction of expression of mammalian genes with transmembrane or ATPase domains.</title>
        <authorList>
            <person name="Inoue S."/>
            <person name="Sano H."/>
            <person name="Ohta M."/>
        </authorList>
    </citation>
    <scope>NUCLEOTIDE SEQUENCE [MRNA]</scope>
    <source>
        <tissue>Brain</tissue>
    </source>
</reference>
<reference key="2">
    <citation type="journal article" date="2005" name="Science">
        <title>The transcriptional landscape of the mammalian genome.</title>
        <authorList>
            <person name="Carninci P."/>
            <person name="Kasukawa T."/>
            <person name="Katayama S."/>
            <person name="Gough J."/>
            <person name="Frith M.C."/>
            <person name="Maeda N."/>
            <person name="Oyama R."/>
            <person name="Ravasi T."/>
            <person name="Lenhard B."/>
            <person name="Wells C."/>
            <person name="Kodzius R."/>
            <person name="Shimokawa K."/>
            <person name="Bajic V.B."/>
            <person name="Brenner S.E."/>
            <person name="Batalov S."/>
            <person name="Forrest A.R."/>
            <person name="Zavolan M."/>
            <person name="Davis M.J."/>
            <person name="Wilming L.G."/>
            <person name="Aidinis V."/>
            <person name="Allen J.E."/>
            <person name="Ambesi-Impiombato A."/>
            <person name="Apweiler R."/>
            <person name="Aturaliya R.N."/>
            <person name="Bailey T.L."/>
            <person name="Bansal M."/>
            <person name="Baxter L."/>
            <person name="Beisel K.W."/>
            <person name="Bersano T."/>
            <person name="Bono H."/>
            <person name="Chalk A.M."/>
            <person name="Chiu K.P."/>
            <person name="Choudhary V."/>
            <person name="Christoffels A."/>
            <person name="Clutterbuck D.R."/>
            <person name="Crowe M.L."/>
            <person name="Dalla E."/>
            <person name="Dalrymple B.P."/>
            <person name="de Bono B."/>
            <person name="Della Gatta G."/>
            <person name="di Bernardo D."/>
            <person name="Down T."/>
            <person name="Engstrom P."/>
            <person name="Fagiolini M."/>
            <person name="Faulkner G."/>
            <person name="Fletcher C.F."/>
            <person name="Fukushima T."/>
            <person name="Furuno M."/>
            <person name="Futaki S."/>
            <person name="Gariboldi M."/>
            <person name="Georgii-Hemming P."/>
            <person name="Gingeras T.R."/>
            <person name="Gojobori T."/>
            <person name="Green R.E."/>
            <person name="Gustincich S."/>
            <person name="Harbers M."/>
            <person name="Hayashi Y."/>
            <person name="Hensch T.K."/>
            <person name="Hirokawa N."/>
            <person name="Hill D."/>
            <person name="Huminiecki L."/>
            <person name="Iacono M."/>
            <person name="Ikeo K."/>
            <person name="Iwama A."/>
            <person name="Ishikawa T."/>
            <person name="Jakt M."/>
            <person name="Kanapin A."/>
            <person name="Katoh M."/>
            <person name="Kawasawa Y."/>
            <person name="Kelso J."/>
            <person name="Kitamura H."/>
            <person name="Kitano H."/>
            <person name="Kollias G."/>
            <person name="Krishnan S.P."/>
            <person name="Kruger A."/>
            <person name="Kummerfeld S.K."/>
            <person name="Kurochkin I.V."/>
            <person name="Lareau L.F."/>
            <person name="Lazarevic D."/>
            <person name="Lipovich L."/>
            <person name="Liu J."/>
            <person name="Liuni S."/>
            <person name="McWilliam S."/>
            <person name="Madan Babu M."/>
            <person name="Madera M."/>
            <person name="Marchionni L."/>
            <person name="Matsuda H."/>
            <person name="Matsuzawa S."/>
            <person name="Miki H."/>
            <person name="Mignone F."/>
            <person name="Miyake S."/>
            <person name="Morris K."/>
            <person name="Mottagui-Tabar S."/>
            <person name="Mulder N."/>
            <person name="Nakano N."/>
            <person name="Nakauchi H."/>
            <person name="Ng P."/>
            <person name="Nilsson R."/>
            <person name="Nishiguchi S."/>
            <person name="Nishikawa S."/>
            <person name="Nori F."/>
            <person name="Ohara O."/>
            <person name="Okazaki Y."/>
            <person name="Orlando V."/>
            <person name="Pang K.C."/>
            <person name="Pavan W.J."/>
            <person name="Pavesi G."/>
            <person name="Pesole G."/>
            <person name="Petrovsky N."/>
            <person name="Piazza S."/>
            <person name="Reed J."/>
            <person name="Reid J.F."/>
            <person name="Ring B.Z."/>
            <person name="Ringwald M."/>
            <person name="Rost B."/>
            <person name="Ruan Y."/>
            <person name="Salzberg S.L."/>
            <person name="Sandelin A."/>
            <person name="Schneider C."/>
            <person name="Schoenbach C."/>
            <person name="Sekiguchi K."/>
            <person name="Semple C.A."/>
            <person name="Seno S."/>
            <person name="Sessa L."/>
            <person name="Sheng Y."/>
            <person name="Shibata Y."/>
            <person name="Shimada H."/>
            <person name="Shimada K."/>
            <person name="Silva D."/>
            <person name="Sinclair B."/>
            <person name="Sperling S."/>
            <person name="Stupka E."/>
            <person name="Sugiura K."/>
            <person name="Sultana R."/>
            <person name="Takenaka Y."/>
            <person name="Taki K."/>
            <person name="Tammoja K."/>
            <person name="Tan S.L."/>
            <person name="Tang S."/>
            <person name="Taylor M.S."/>
            <person name="Tegner J."/>
            <person name="Teichmann S.A."/>
            <person name="Ueda H.R."/>
            <person name="van Nimwegen E."/>
            <person name="Verardo R."/>
            <person name="Wei C.L."/>
            <person name="Yagi K."/>
            <person name="Yamanishi H."/>
            <person name="Zabarovsky E."/>
            <person name="Zhu S."/>
            <person name="Zimmer A."/>
            <person name="Hide W."/>
            <person name="Bult C."/>
            <person name="Grimmond S.M."/>
            <person name="Teasdale R.D."/>
            <person name="Liu E.T."/>
            <person name="Brusic V."/>
            <person name="Quackenbush J."/>
            <person name="Wahlestedt C."/>
            <person name="Mattick J.S."/>
            <person name="Hume D.A."/>
            <person name="Kai C."/>
            <person name="Sasaki D."/>
            <person name="Tomaru Y."/>
            <person name="Fukuda S."/>
            <person name="Kanamori-Katayama M."/>
            <person name="Suzuki M."/>
            <person name="Aoki J."/>
            <person name="Arakawa T."/>
            <person name="Iida J."/>
            <person name="Imamura K."/>
            <person name="Itoh M."/>
            <person name="Kato T."/>
            <person name="Kawaji H."/>
            <person name="Kawagashira N."/>
            <person name="Kawashima T."/>
            <person name="Kojima M."/>
            <person name="Kondo S."/>
            <person name="Konno H."/>
            <person name="Nakano K."/>
            <person name="Ninomiya N."/>
            <person name="Nishio T."/>
            <person name="Okada M."/>
            <person name="Plessy C."/>
            <person name="Shibata K."/>
            <person name="Shiraki T."/>
            <person name="Suzuki S."/>
            <person name="Tagami M."/>
            <person name="Waki K."/>
            <person name="Watahiki A."/>
            <person name="Okamura-Oho Y."/>
            <person name="Suzuki H."/>
            <person name="Kawai J."/>
            <person name="Hayashizaki Y."/>
        </authorList>
    </citation>
    <scope>NUCLEOTIDE SEQUENCE [LARGE SCALE MRNA]</scope>
    <source>
        <strain>C57BL/6J</strain>
        <tissue>Pancreas</tissue>
    </source>
</reference>
<reference key="3">
    <citation type="journal article" date="2004" name="Genome Res.">
        <title>The status, quality, and expansion of the NIH full-length cDNA project: the Mammalian Gene Collection (MGC).</title>
        <authorList>
            <consortium name="The MGC Project Team"/>
        </authorList>
    </citation>
    <scope>NUCLEOTIDE SEQUENCE [LARGE SCALE MRNA]</scope>
    <source>
        <strain>C57BL/6J</strain>
        <tissue>Mammary gland</tissue>
    </source>
</reference>
<reference key="4">
    <citation type="journal article" date="2010" name="Cell">
        <title>A tissue-specific atlas of mouse protein phosphorylation and expression.</title>
        <authorList>
            <person name="Huttlin E.L."/>
            <person name="Jedrychowski M.P."/>
            <person name="Elias J.E."/>
            <person name="Goswami T."/>
            <person name="Rad R."/>
            <person name="Beausoleil S.A."/>
            <person name="Villen J."/>
            <person name="Haas W."/>
            <person name="Sowa M.E."/>
            <person name="Gygi S.P."/>
        </authorList>
    </citation>
    <scope>IDENTIFICATION BY MASS SPECTROMETRY [LARGE SCALE ANALYSIS]</scope>
    <source>
        <tissue>Brain</tissue>
        <tissue>Brown adipose tissue</tissue>
        <tissue>Heart</tissue>
        <tissue>Kidney</tissue>
        <tissue>Lung</tissue>
        <tissue>Pancreas</tissue>
        <tissue>Spleen</tissue>
        <tissue>Testis</tissue>
    </source>
</reference>
<accession>Q9JME7</accession>
<accession>A4FUI9</accession>
<keyword id="KW-0963">Cytoplasm</keyword>
<keyword id="KW-0256">Endoplasmic reticulum</keyword>
<keyword id="KW-0931">ER-Golgi transport</keyword>
<keyword id="KW-0333">Golgi apparatus</keyword>
<keyword id="KW-1185">Reference proteome</keyword>
<keyword id="KW-0813">Transport</keyword>
<gene>
    <name type="primary">Trappc2l</name>
</gene>
<organism>
    <name type="scientific">Mus musculus</name>
    <name type="common">Mouse</name>
    <dbReference type="NCBI Taxonomy" id="10090"/>
    <lineage>
        <taxon>Eukaryota</taxon>
        <taxon>Metazoa</taxon>
        <taxon>Chordata</taxon>
        <taxon>Craniata</taxon>
        <taxon>Vertebrata</taxon>
        <taxon>Euteleostomi</taxon>
        <taxon>Mammalia</taxon>
        <taxon>Eutheria</taxon>
        <taxon>Euarchontoglires</taxon>
        <taxon>Glires</taxon>
        <taxon>Rodentia</taxon>
        <taxon>Myomorpha</taxon>
        <taxon>Muroidea</taxon>
        <taxon>Muridae</taxon>
        <taxon>Murinae</taxon>
        <taxon>Mus</taxon>
        <taxon>Mus</taxon>
    </lineage>
</organism>
<comment type="function">
    <text evidence="1">May play a role in vesicular transport from endoplasmic reticulum to Golgi.</text>
</comment>
<comment type="subunit">
    <text evidence="1">Component of the multisubunit TRAPP (transport protein particle) complex, which includes at least TRAPPC2, TRAPPC2L, TRAPPC3, TRAPPC3L, TRAPPC4, TRAPPC5, TRAPPC8, TRAPPC9, TRAPPC10, TRAPPC11 and TRAPPC12. Interacts with the heterodimer TRAPPC3-TRAPPC6A (By similarity).</text>
</comment>
<comment type="subcellular location">
    <subcellularLocation>
        <location evidence="1">Cytoplasm</location>
        <location evidence="1">Perinuclear region</location>
    </subcellularLocation>
    <subcellularLocation>
        <location evidence="1">Endoplasmic reticulum</location>
    </subcellularLocation>
    <subcellularLocation>
        <location evidence="1">Golgi apparatus</location>
    </subcellularLocation>
</comment>
<comment type="similarity">
    <text evidence="2">Belongs to the TRAPP small subunits family. Sedlin subfamily.</text>
</comment>
<comment type="sequence caution" evidence="2">
    <conflict type="erroneous initiation">
        <sequence resource="EMBL-CDS" id="AAI14969"/>
    </conflict>
</comment>
<protein>
    <recommendedName>
        <fullName>Trafficking protein particle complex subunit 2-like protein</fullName>
    </recommendedName>
</protein>
<sequence>MAVCIAVIAKENYPLYIRSTPTESELKFHYMVHTSLDVVDEKISAMGKALVDQRELYLGLLYPTEDYKVYGYVTNSKVKFVMVVDSSNTALRDNEIRSMFRKLHNSYTDVMCNPFYNPGDRIQSRAFDTMVTSMMIQVC</sequence>